<gene>
    <name evidence="1" type="primary">recA2</name>
</gene>
<keyword id="KW-0067">ATP-binding</keyword>
<keyword id="KW-0963">Cytoplasm</keyword>
<keyword id="KW-0227">DNA damage</keyword>
<keyword id="KW-0233">DNA recombination</keyword>
<keyword id="KW-0234">DNA repair</keyword>
<keyword id="KW-0238">DNA-binding</keyword>
<keyword id="KW-0547">Nucleotide-binding</keyword>
<keyword id="KW-0742">SOS response</keyword>
<sequence>MAVNQEKEKAIELAMSAVERQFGKGSIMRLGNDEPMMRDVQAIPTGSISLDIALGVGGVPKGRIIEIFGPESSGKTTLCLHIVAEAQKRGGICGYVDAEHALDVGYARKLGVRTDDLLLSQPDTGEQALEIAEMLVRSGAIDVLVVDSVAALVPKAELEGEMGDAHMGVQARLMSQALRKLTGTIAKSQTCVIFINQIRMKIGVMFGNPETTTGGNALKFYASQRLDIRRIGAIKNGDNVVGSRTRVKVVKNKVAPPFKEVEFDIMYGTGISREGDLIDLASNENIVEKSGSWFSFNGERIGQGRENVKEYLREHPEIAKDIEGRVLEKYGIGKSGAPSPRRRTSPRRPKVAARSAAV</sequence>
<comment type="function">
    <text evidence="1">Can catalyze the hydrolysis of ATP in the presence of single-stranded DNA, the ATP-dependent uptake of single-stranded DNA by duplex DNA, and the ATP-dependent hybridization of homologous single-stranded DNAs. It interacts with LexA causing its activation and leading to its autocatalytic cleavage.</text>
</comment>
<comment type="subcellular location">
    <subcellularLocation>
        <location evidence="1">Cytoplasm</location>
    </subcellularLocation>
</comment>
<comment type="miscellaneous">
    <text>There are two genes for RecA in M.xanthus; recA1 seems less functional than recA2.</text>
</comment>
<comment type="similarity">
    <text evidence="1">Belongs to the RecA family.</text>
</comment>
<dbReference type="EMBL" id="L40368">
    <property type="protein sequence ID" value="AAC37001.1"/>
    <property type="molecule type" value="Genomic_DNA"/>
</dbReference>
<dbReference type="SMR" id="P48292"/>
<dbReference type="GO" id="GO:0005829">
    <property type="term" value="C:cytosol"/>
    <property type="evidence" value="ECO:0007669"/>
    <property type="project" value="TreeGrafter"/>
</dbReference>
<dbReference type="GO" id="GO:0005524">
    <property type="term" value="F:ATP binding"/>
    <property type="evidence" value="ECO:0007669"/>
    <property type="project" value="UniProtKB-UniRule"/>
</dbReference>
<dbReference type="GO" id="GO:0016887">
    <property type="term" value="F:ATP hydrolysis activity"/>
    <property type="evidence" value="ECO:0007669"/>
    <property type="project" value="InterPro"/>
</dbReference>
<dbReference type="GO" id="GO:0140664">
    <property type="term" value="F:ATP-dependent DNA damage sensor activity"/>
    <property type="evidence" value="ECO:0007669"/>
    <property type="project" value="InterPro"/>
</dbReference>
<dbReference type="GO" id="GO:0003684">
    <property type="term" value="F:damaged DNA binding"/>
    <property type="evidence" value="ECO:0007669"/>
    <property type="project" value="UniProtKB-UniRule"/>
</dbReference>
<dbReference type="GO" id="GO:0003697">
    <property type="term" value="F:single-stranded DNA binding"/>
    <property type="evidence" value="ECO:0007669"/>
    <property type="project" value="UniProtKB-UniRule"/>
</dbReference>
<dbReference type="GO" id="GO:0006310">
    <property type="term" value="P:DNA recombination"/>
    <property type="evidence" value="ECO:0007669"/>
    <property type="project" value="UniProtKB-UniRule"/>
</dbReference>
<dbReference type="GO" id="GO:0006281">
    <property type="term" value="P:DNA repair"/>
    <property type="evidence" value="ECO:0007669"/>
    <property type="project" value="UniProtKB-UniRule"/>
</dbReference>
<dbReference type="GO" id="GO:0009432">
    <property type="term" value="P:SOS response"/>
    <property type="evidence" value="ECO:0007669"/>
    <property type="project" value="UniProtKB-UniRule"/>
</dbReference>
<dbReference type="CDD" id="cd00983">
    <property type="entry name" value="RecA"/>
    <property type="match status" value="1"/>
</dbReference>
<dbReference type="FunFam" id="3.40.50.300:FF:000087">
    <property type="entry name" value="Recombinase RecA"/>
    <property type="match status" value="1"/>
</dbReference>
<dbReference type="Gene3D" id="3.40.50.300">
    <property type="entry name" value="P-loop containing nucleotide triphosphate hydrolases"/>
    <property type="match status" value="1"/>
</dbReference>
<dbReference type="HAMAP" id="MF_00268">
    <property type="entry name" value="RecA"/>
    <property type="match status" value="1"/>
</dbReference>
<dbReference type="InterPro" id="IPR003593">
    <property type="entry name" value="AAA+_ATPase"/>
</dbReference>
<dbReference type="InterPro" id="IPR013765">
    <property type="entry name" value="DNA_recomb/repair_RecA"/>
</dbReference>
<dbReference type="InterPro" id="IPR020584">
    <property type="entry name" value="DNA_recomb/repair_RecA_CS"/>
</dbReference>
<dbReference type="InterPro" id="IPR027417">
    <property type="entry name" value="P-loop_NTPase"/>
</dbReference>
<dbReference type="InterPro" id="IPR049261">
    <property type="entry name" value="RecA-like_C"/>
</dbReference>
<dbReference type="InterPro" id="IPR049428">
    <property type="entry name" value="RecA-like_N"/>
</dbReference>
<dbReference type="InterPro" id="IPR020588">
    <property type="entry name" value="RecA_ATP-bd"/>
</dbReference>
<dbReference type="InterPro" id="IPR023400">
    <property type="entry name" value="RecA_C_sf"/>
</dbReference>
<dbReference type="InterPro" id="IPR020587">
    <property type="entry name" value="RecA_monomer-monomer_interface"/>
</dbReference>
<dbReference type="NCBIfam" id="TIGR02012">
    <property type="entry name" value="tigrfam_recA"/>
    <property type="match status" value="1"/>
</dbReference>
<dbReference type="PANTHER" id="PTHR45900:SF1">
    <property type="entry name" value="MITOCHONDRIAL DNA REPAIR PROTEIN RECA HOMOLOG-RELATED"/>
    <property type="match status" value="1"/>
</dbReference>
<dbReference type="PANTHER" id="PTHR45900">
    <property type="entry name" value="RECA"/>
    <property type="match status" value="1"/>
</dbReference>
<dbReference type="Pfam" id="PF00154">
    <property type="entry name" value="RecA"/>
    <property type="match status" value="1"/>
</dbReference>
<dbReference type="Pfam" id="PF21096">
    <property type="entry name" value="RecA_C"/>
    <property type="match status" value="1"/>
</dbReference>
<dbReference type="PRINTS" id="PR00142">
    <property type="entry name" value="RECA"/>
</dbReference>
<dbReference type="SMART" id="SM00382">
    <property type="entry name" value="AAA"/>
    <property type="match status" value="1"/>
</dbReference>
<dbReference type="SUPFAM" id="SSF52540">
    <property type="entry name" value="P-loop containing nucleoside triphosphate hydrolases"/>
    <property type="match status" value="1"/>
</dbReference>
<dbReference type="SUPFAM" id="SSF54752">
    <property type="entry name" value="RecA protein, C-terminal domain"/>
    <property type="match status" value="1"/>
</dbReference>
<dbReference type="PROSITE" id="PS00321">
    <property type="entry name" value="RECA_1"/>
    <property type="match status" value="1"/>
</dbReference>
<dbReference type="PROSITE" id="PS50162">
    <property type="entry name" value="RECA_2"/>
    <property type="match status" value="1"/>
</dbReference>
<dbReference type="PROSITE" id="PS50163">
    <property type="entry name" value="RECA_3"/>
    <property type="match status" value="1"/>
</dbReference>
<protein>
    <recommendedName>
        <fullName evidence="1">Protein RecA 2</fullName>
    </recommendedName>
    <alternativeName>
        <fullName evidence="1">Recombinase A 2</fullName>
    </alternativeName>
</protein>
<reference key="1">
    <citation type="journal article" date="1995" name="J. Bacteriol.">
        <title>Two recA genes in Myxococcus xanthus.</title>
        <authorList>
            <person name="Norioka N."/>
            <person name="Hsu M.-Y."/>
            <person name="Inouye S."/>
            <person name="Inouye M."/>
        </authorList>
    </citation>
    <scope>NUCLEOTIDE SEQUENCE [GENOMIC DNA]</scope>
</reference>
<feature type="chain" id="PRO_0000122769" description="Protein RecA 2">
    <location>
        <begin position="1"/>
        <end position="358"/>
    </location>
</feature>
<feature type="region of interest" description="Disordered" evidence="2">
    <location>
        <begin position="331"/>
        <end position="358"/>
    </location>
</feature>
<feature type="compositionally biased region" description="Basic residues" evidence="2">
    <location>
        <begin position="340"/>
        <end position="351"/>
    </location>
</feature>
<feature type="binding site" evidence="1">
    <location>
        <begin position="69"/>
        <end position="76"/>
    </location>
    <ligand>
        <name>ATP</name>
        <dbReference type="ChEBI" id="CHEBI:30616"/>
    </ligand>
</feature>
<name>RECA2_MYXXA</name>
<organism>
    <name type="scientific">Myxococcus xanthus</name>
    <dbReference type="NCBI Taxonomy" id="34"/>
    <lineage>
        <taxon>Bacteria</taxon>
        <taxon>Pseudomonadati</taxon>
        <taxon>Myxococcota</taxon>
        <taxon>Myxococcia</taxon>
        <taxon>Myxococcales</taxon>
        <taxon>Cystobacterineae</taxon>
        <taxon>Myxococcaceae</taxon>
        <taxon>Myxococcus</taxon>
    </lineage>
</organism>
<proteinExistence type="inferred from homology"/>
<accession>P48292</accession>
<evidence type="ECO:0000255" key="1">
    <source>
        <dbReference type="HAMAP-Rule" id="MF_00268"/>
    </source>
</evidence>
<evidence type="ECO:0000256" key="2">
    <source>
        <dbReference type="SAM" id="MobiDB-lite"/>
    </source>
</evidence>